<protein>
    <recommendedName>
        <fullName>Putative heat shock protein HSP 90-alpha A5</fullName>
    </recommendedName>
    <alternativeName>
        <fullName>Heat shock protein 90-alpha E</fullName>
        <shortName>Heat shock protein 90Ae</shortName>
    </alternativeName>
</protein>
<organism>
    <name type="scientific">Homo sapiens</name>
    <name type="common">Human</name>
    <dbReference type="NCBI Taxonomy" id="9606"/>
    <lineage>
        <taxon>Eukaryota</taxon>
        <taxon>Metazoa</taxon>
        <taxon>Chordata</taxon>
        <taxon>Craniata</taxon>
        <taxon>Vertebrata</taxon>
        <taxon>Euteleostomi</taxon>
        <taxon>Mammalia</taxon>
        <taxon>Eutheria</taxon>
        <taxon>Euarchontoglires</taxon>
        <taxon>Primates</taxon>
        <taxon>Haplorrhini</taxon>
        <taxon>Catarrhini</taxon>
        <taxon>Hominidae</taxon>
        <taxon>Homo</taxon>
    </lineage>
</organism>
<accession>Q58FG0</accession>
<feature type="chain" id="PRO_0000340660" description="Putative heat shock protein HSP 90-alpha A5">
    <location>
        <begin position="1"/>
        <end position="334"/>
    </location>
</feature>
<feature type="region of interest" description="Disordered" evidence="4">
    <location>
        <begin position="55"/>
        <end position="107"/>
    </location>
</feature>
<feature type="region of interest" description="Disordered" evidence="4">
    <location>
        <begin position="314"/>
        <end position="334"/>
    </location>
</feature>
<feature type="coiled-coil region" evidence="3">
    <location>
        <begin position="234"/>
        <end position="267"/>
    </location>
</feature>
<feature type="short sequence motif" description="TPR repeat-binding">
    <location>
        <begin position="327"/>
        <end position="331"/>
    </location>
</feature>
<feature type="compositionally biased region" description="Basic and acidic residues" evidence="4">
    <location>
        <begin position="59"/>
        <end position="69"/>
    </location>
</feature>
<feature type="compositionally biased region" description="Acidic residues" evidence="4">
    <location>
        <begin position="85"/>
        <end position="94"/>
    </location>
</feature>
<feature type="compositionally biased region" description="Basic and acidic residues" evidence="4">
    <location>
        <begin position="320"/>
        <end position="334"/>
    </location>
</feature>
<feature type="modified residue" description="Phosphoserine" evidence="2">
    <location>
        <position position="89"/>
    </location>
</feature>
<comment type="function">
    <text evidence="1">Putative molecular chaperone that may promote the maturation, structural maintenance and proper regulation of specific target proteins.</text>
</comment>
<comment type="subunit">
    <text evidence="1">Homodimer.</text>
</comment>
<comment type="interaction">
    <interactant intactId="EBI-11323222">
        <id>Q58FG0</id>
    </interactant>
    <interactant intactId="EBI-624291">
        <id>Q96GD4</id>
        <label>AURKB</label>
    </interactant>
    <organismsDiffer>false</organismsDiffer>
    <experiments>2</experiments>
</comment>
<comment type="interaction">
    <interactant intactId="EBI-11323222">
        <id>Q58FG0</id>
    </interactant>
    <interactant intactId="EBI-6381227">
        <id>Q92772</id>
        <label>CDKL2</label>
    </interactant>
    <organismsDiffer>false</organismsDiffer>
    <experiments>3</experiments>
</comment>
<comment type="subcellular location">
    <subcellularLocation>
        <location evidence="1">Cytoplasm</location>
    </subcellularLocation>
</comment>
<comment type="domain">
    <text evidence="1">The TPR repeat-binding motif mediates interaction with TPR repeat-containing proteins.</text>
</comment>
<comment type="similarity">
    <text evidence="5">Belongs to the heat shock protein 90 family.</text>
</comment>
<comment type="caution">
    <text evidence="5">Despite classification as a pseudogene, the existence of this protein is supported by unambiguous mass spectrometry evidence.</text>
</comment>
<proteinExistence type="evidence at protein level"/>
<evidence type="ECO:0000250" key="1"/>
<evidence type="ECO:0000250" key="2">
    <source>
        <dbReference type="UniProtKB" id="Q58FF8"/>
    </source>
</evidence>
<evidence type="ECO:0000255" key="3"/>
<evidence type="ECO:0000256" key="4">
    <source>
        <dbReference type="SAM" id="MobiDB-lite"/>
    </source>
</evidence>
<evidence type="ECO:0000305" key="5"/>
<dbReference type="EMBL" id="AY956761">
    <property type="protein sequence ID" value="AAX38248.1"/>
    <property type="molecule type" value="mRNA"/>
</dbReference>
<dbReference type="SMR" id="Q58FG0"/>
<dbReference type="FunCoup" id="Q58FG0">
    <property type="interactions" value="351"/>
</dbReference>
<dbReference type="IntAct" id="Q58FG0">
    <property type="interactions" value="77"/>
</dbReference>
<dbReference type="MINT" id="Q58FG0"/>
<dbReference type="GlyGen" id="Q58FG0">
    <property type="glycosylation" value="1 site, 1 O-linked glycan (1 site)"/>
</dbReference>
<dbReference type="iPTMnet" id="Q58FG0"/>
<dbReference type="PhosphoSitePlus" id="Q58FG0"/>
<dbReference type="SwissPalm" id="Q58FG0"/>
<dbReference type="BioMuta" id="HGNC:32535"/>
<dbReference type="jPOST" id="Q58FG0"/>
<dbReference type="MassIVE" id="Q58FG0"/>
<dbReference type="ProteomicsDB" id="62624"/>
<dbReference type="Pumba" id="Q58FG0"/>
<dbReference type="AGR" id="HGNC:32535"/>
<dbReference type="GeneCards" id="HSP90AA5P"/>
<dbReference type="HGNC" id="HGNC:32535">
    <property type="gene designation" value="HSP90AA5P"/>
</dbReference>
<dbReference type="neXtProt" id="NX_Q58FG0"/>
<dbReference type="InParanoid" id="Q58FG0"/>
<dbReference type="PAN-GO" id="Q58FG0">
    <property type="GO annotations" value="0 GO annotations based on evolutionary models"/>
</dbReference>
<dbReference type="PhylomeDB" id="Q58FG0"/>
<dbReference type="PathwayCommons" id="Q58FG0"/>
<dbReference type="SignaLink" id="Q58FG0"/>
<dbReference type="Pharos" id="Q58FG0">
    <property type="development level" value="Tdark"/>
</dbReference>
<dbReference type="PRO" id="PR:Q58FG0"/>
<dbReference type="Proteomes" id="UP000005640">
    <property type="component" value="Unplaced"/>
</dbReference>
<dbReference type="RNAct" id="Q58FG0">
    <property type="molecule type" value="protein"/>
</dbReference>
<dbReference type="GO" id="GO:0005737">
    <property type="term" value="C:cytoplasm"/>
    <property type="evidence" value="ECO:0007669"/>
    <property type="project" value="UniProtKB-SubCell"/>
</dbReference>
<dbReference type="GO" id="GO:0005524">
    <property type="term" value="F:ATP binding"/>
    <property type="evidence" value="ECO:0007669"/>
    <property type="project" value="UniProtKB-KW"/>
</dbReference>
<dbReference type="GO" id="GO:0016887">
    <property type="term" value="F:ATP hydrolysis activity"/>
    <property type="evidence" value="ECO:0007669"/>
    <property type="project" value="InterPro"/>
</dbReference>
<dbReference type="GO" id="GO:0140662">
    <property type="term" value="F:ATP-dependent protein folding chaperone"/>
    <property type="evidence" value="ECO:0007669"/>
    <property type="project" value="InterPro"/>
</dbReference>
<dbReference type="GO" id="GO:0051082">
    <property type="term" value="F:unfolded protein binding"/>
    <property type="evidence" value="ECO:0007669"/>
    <property type="project" value="InterPro"/>
</dbReference>
<dbReference type="Gene3D" id="3.40.50.11260">
    <property type="match status" value="1"/>
</dbReference>
<dbReference type="Gene3D" id="1.20.120.790">
    <property type="entry name" value="Heat shock protein 90, C-terminal domain"/>
    <property type="match status" value="1"/>
</dbReference>
<dbReference type="Gene3D" id="3.30.565.10">
    <property type="entry name" value="Histidine kinase-like ATPase, C-terminal domain"/>
    <property type="match status" value="1"/>
</dbReference>
<dbReference type="InterPro" id="IPR036890">
    <property type="entry name" value="HATPase_C_sf"/>
</dbReference>
<dbReference type="InterPro" id="IPR037196">
    <property type="entry name" value="HSP90_C"/>
</dbReference>
<dbReference type="InterPro" id="IPR001404">
    <property type="entry name" value="Hsp90_fam"/>
</dbReference>
<dbReference type="InterPro" id="IPR020568">
    <property type="entry name" value="Ribosomal_Su5_D2-typ_SF"/>
</dbReference>
<dbReference type="PANTHER" id="PTHR11528">
    <property type="entry name" value="HEAT SHOCK PROTEIN 90 FAMILY MEMBER"/>
    <property type="match status" value="1"/>
</dbReference>
<dbReference type="Pfam" id="PF00183">
    <property type="entry name" value="HSP90"/>
    <property type="match status" value="2"/>
</dbReference>
<dbReference type="SUPFAM" id="SSF55874">
    <property type="entry name" value="ATPase domain of HSP90 chaperone/DNA topoisomerase II/histidine kinase"/>
    <property type="match status" value="1"/>
</dbReference>
<dbReference type="SUPFAM" id="SSF54211">
    <property type="entry name" value="Ribosomal protein S5 domain 2-like"/>
    <property type="match status" value="2"/>
</dbReference>
<name>HS905_HUMAN</name>
<sequence length="334" mass="38738">MGFHHVGQAGLELLTSGHPALERRPEYLEERRIKEIVKKHSQFIGYPITLFVEKKRNKQVSDAEAEKKEDKRKKKKESNDKPEIEDVGSDEEEEKKDADKKKKKSKEKYIDQELNKTKPIWTRNPDAITNEEYGEFHQSLTNNWEDHLAVKHFSVEGQLEELKDSRRVMKANQKHIYYITGETKDQVANSAFVECLQKHGLEVIYMIELIDKYCVQQLKELESKTVVSVAKEGLELPEDEEEKKKQEEKKTKFENLCKIMKDMLEKKVKKVVVSNCMEDPQRHTNKIYRMIKLGLGVDEYDPTANDINAAITKEMPPLRGGDDTSRMEEVGGSG</sequence>
<gene>
    <name type="primary">HSP90AA5P</name>
    <name type="synonym">HSP90AE</name>
</gene>
<reference key="1">
    <citation type="journal article" date="2005" name="Genomics">
        <title>The HSP90 family of genes in the human genome: insights into their divergence and evolution.</title>
        <authorList>
            <person name="Chen B."/>
            <person name="Piel W.H."/>
            <person name="Gui L."/>
            <person name="Bruford E."/>
            <person name="Monteiro A."/>
        </authorList>
    </citation>
    <scope>NUCLEOTIDE SEQUENCE [MRNA]</scope>
    <scope>NOMENCLATURE</scope>
</reference>
<keyword id="KW-0067">ATP-binding</keyword>
<keyword id="KW-0143">Chaperone</keyword>
<keyword id="KW-0175">Coiled coil</keyword>
<keyword id="KW-0963">Cytoplasm</keyword>
<keyword id="KW-0547">Nucleotide-binding</keyword>
<keyword id="KW-0597">Phosphoprotein</keyword>
<keyword id="KW-1267">Proteomics identification</keyword>
<keyword id="KW-1185">Reference proteome</keyword>
<keyword id="KW-0346">Stress response</keyword>